<keyword id="KW-0067">ATP-binding</keyword>
<keyword id="KW-0436">Ligase</keyword>
<keyword id="KW-0460">Magnesium</keyword>
<keyword id="KW-0479">Metal-binding</keyword>
<keyword id="KW-0520">NAD</keyword>
<keyword id="KW-0547">Nucleotide-binding</keyword>
<name>NADE_STAHJ</name>
<feature type="chain" id="PRO_1000077620" description="NH(3)-dependent NAD(+) synthetase">
    <location>
        <begin position="1"/>
        <end position="273"/>
    </location>
</feature>
<feature type="binding site" evidence="1">
    <location>
        <begin position="47"/>
        <end position="54"/>
    </location>
    <ligand>
        <name>ATP</name>
        <dbReference type="ChEBI" id="CHEBI:30616"/>
    </ligand>
</feature>
<feature type="binding site" evidence="1">
    <location>
        <position position="53"/>
    </location>
    <ligand>
        <name>Mg(2+)</name>
        <dbReference type="ChEBI" id="CHEBI:18420"/>
    </ligand>
</feature>
<feature type="binding site" evidence="1">
    <location>
        <position position="139"/>
    </location>
    <ligand>
        <name>deamido-NAD(+)</name>
        <dbReference type="ChEBI" id="CHEBI:58437"/>
    </ligand>
</feature>
<feature type="binding site" evidence="1">
    <location>
        <position position="159"/>
    </location>
    <ligand>
        <name>ATP</name>
        <dbReference type="ChEBI" id="CHEBI:30616"/>
    </ligand>
</feature>
<feature type="binding site" evidence="1">
    <location>
        <position position="164"/>
    </location>
    <ligand>
        <name>Mg(2+)</name>
        <dbReference type="ChEBI" id="CHEBI:18420"/>
    </ligand>
</feature>
<feature type="binding site" evidence="1">
    <location>
        <position position="172"/>
    </location>
    <ligand>
        <name>deamido-NAD(+)</name>
        <dbReference type="ChEBI" id="CHEBI:58437"/>
    </ligand>
</feature>
<feature type="binding site" evidence="1">
    <location>
        <position position="179"/>
    </location>
    <ligand>
        <name>deamido-NAD(+)</name>
        <dbReference type="ChEBI" id="CHEBI:58437"/>
    </ligand>
</feature>
<feature type="binding site" evidence="1">
    <location>
        <position position="188"/>
    </location>
    <ligand>
        <name>ATP</name>
        <dbReference type="ChEBI" id="CHEBI:30616"/>
    </ligand>
</feature>
<feature type="binding site" evidence="1">
    <location>
        <position position="210"/>
    </location>
    <ligand>
        <name>ATP</name>
        <dbReference type="ChEBI" id="CHEBI:30616"/>
    </ligand>
</feature>
<feature type="binding site" evidence="1">
    <location>
        <begin position="259"/>
        <end position="260"/>
    </location>
    <ligand>
        <name>deamido-NAD(+)</name>
        <dbReference type="ChEBI" id="CHEBI:58437"/>
    </ligand>
</feature>
<protein>
    <recommendedName>
        <fullName evidence="1">NH(3)-dependent NAD(+) synthetase</fullName>
        <ecNumber evidence="1">6.3.1.5</ecNumber>
    </recommendedName>
</protein>
<organism>
    <name type="scientific">Staphylococcus haemolyticus (strain JCSC1435)</name>
    <dbReference type="NCBI Taxonomy" id="279808"/>
    <lineage>
        <taxon>Bacteria</taxon>
        <taxon>Bacillati</taxon>
        <taxon>Bacillota</taxon>
        <taxon>Bacilli</taxon>
        <taxon>Bacillales</taxon>
        <taxon>Staphylococcaceae</taxon>
        <taxon>Staphylococcus</taxon>
    </lineage>
</organism>
<gene>
    <name evidence="1" type="primary">nadE</name>
    <name type="ordered locus">SH1040</name>
</gene>
<accession>Q4L7M6</accession>
<evidence type="ECO:0000255" key="1">
    <source>
        <dbReference type="HAMAP-Rule" id="MF_00193"/>
    </source>
</evidence>
<sequence length="273" mass="30838">MTNLQDIVVNEMKVKKHIDSEQESREIIQFIKSYVQSHSFIKSLVLGISGGQDSTLTGKLAQLAVEELRNEGRDCQFIAVKLPYGVQKDAEEVEDALNFIHPDEIITVNIKPAVDQSVKSLNEAGIELTDFQRGNEKARERMKVQFSIASNRSGIVIGTDHSAENITGFYTKYGDGAADIAPIFGLNKRQGRQLLKYLNAPKHLYEKVPTADLEDDKPQLPDEEALGVTYDQIDDYLEGKHISSEARDTIENHYVKNAHKRELAYTRYTWPKN</sequence>
<comment type="function">
    <text evidence="1">Catalyzes the ATP-dependent amidation of deamido-NAD to form NAD. Uses ammonia as a nitrogen source.</text>
</comment>
<comment type="catalytic activity">
    <reaction evidence="1">
        <text>deamido-NAD(+) + NH4(+) + ATP = AMP + diphosphate + NAD(+) + H(+)</text>
        <dbReference type="Rhea" id="RHEA:21188"/>
        <dbReference type="ChEBI" id="CHEBI:15378"/>
        <dbReference type="ChEBI" id="CHEBI:28938"/>
        <dbReference type="ChEBI" id="CHEBI:30616"/>
        <dbReference type="ChEBI" id="CHEBI:33019"/>
        <dbReference type="ChEBI" id="CHEBI:57540"/>
        <dbReference type="ChEBI" id="CHEBI:58437"/>
        <dbReference type="ChEBI" id="CHEBI:456215"/>
        <dbReference type="EC" id="6.3.1.5"/>
    </reaction>
</comment>
<comment type="pathway">
    <text evidence="1">Cofactor biosynthesis; NAD(+) biosynthesis; NAD(+) from deamido-NAD(+) (ammonia route): step 1/1.</text>
</comment>
<comment type="subunit">
    <text evidence="1">Homodimer.</text>
</comment>
<comment type="similarity">
    <text evidence="1">Belongs to the NAD synthetase family.</text>
</comment>
<reference key="1">
    <citation type="journal article" date="2005" name="J. Bacteriol.">
        <title>Whole-genome sequencing of Staphylococcus haemolyticus uncovers the extreme plasticity of its genome and the evolution of human-colonizing staphylococcal species.</title>
        <authorList>
            <person name="Takeuchi F."/>
            <person name="Watanabe S."/>
            <person name="Baba T."/>
            <person name="Yuzawa H."/>
            <person name="Ito T."/>
            <person name="Morimoto Y."/>
            <person name="Kuroda M."/>
            <person name="Cui L."/>
            <person name="Takahashi M."/>
            <person name="Ankai A."/>
            <person name="Baba S."/>
            <person name="Fukui S."/>
            <person name="Lee J.C."/>
            <person name="Hiramatsu K."/>
        </authorList>
    </citation>
    <scope>NUCLEOTIDE SEQUENCE [LARGE SCALE GENOMIC DNA]</scope>
    <source>
        <strain>JCSC1435</strain>
    </source>
</reference>
<proteinExistence type="inferred from homology"/>
<dbReference type="EC" id="6.3.1.5" evidence="1"/>
<dbReference type="EMBL" id="AP006716">
    <property type="protein sequence ID" value="BAE04349.1"/>
    <property type="molecule type" value="Genomic_DNA"/>
</dbReference>
<dbReference type="RefSeq" id="WP_011275346.1">
    <property type="nucleotide sequence ID" value="NC_007168.1"/>
</dbReference>
<dbReference type="SMR" id="Q4L7M6"/>
<dbReference type="GeneID" id="93780425"/>
<dbReference type="KEGG" id="sha:SH1040"/>
<dbReference type="eggNOG" id="COG0171">
    <property type="taxonomic scope" value="Bacteria"/>
</dbReference>
<dbReference type="HOGENOM" id="CLU_059327_3_0_9"/>
<dbReference type="OrthoDB" id="9803818at2"/>
<dbReference type="UniPathway" id="UPA00253">
    <property type="reaction ID" value="UER00333"/>
</dbReference>
<dbReference type="Proteomes" id="UP000000543">
    <property type="component" value="Chromosome"/>
</dbReference>
<dbReference type="GO" id="GO:0005737">
    <property type="term" value="C:cytoplasm"/>
    <property type="evidence" value="ECO:0007669"/>
    <property type="project" value="InterPro"/>
</dbReference>
<dbReference type="GO" id="GO:0005524">
    <property type="term" value="F:ATP binding"/>
    <property type="evidence" value="ECO:0007669"/>
    <property type="project" value="UniProtKB-UniRule"/>
</dbReference>
<dbReference type="GO" id="GO:0004359">
    <property type="term" value="F:glutaminase activity"/>
    <property type="evidence" value="ECO:0007669"/>
    <property type="project" value="InterPro"/>
</dbReference>
<dbReference type="GO" id="GO:0046872">
    <property type="term" value="F:metal ion binding"/>
    <property type="evidence" value="ECO:0007669"/>
    <property type="project" value="UniProtKB-KW"/>
</dbReference>
<dbReference type="GO" id="GO:0003952">
    <property type="term" value="F:NAD+ synthase (glutamine-hydrolyzing) activity"/>
    <property type="evidence" value="ECO:0007669"/>
    <property type="project" value="InterPro"/>
</dbReference>
<dbReference type="GO" id="GO:0008795">
    <property type="term" value="F:NAD+ synthase activity"/>
    <property type="evidence" value="ECO:0007669"/>
    <property type="project" value="UniProtKB-UniRule"/>
</dbReference>
<dbReference type="GO" id="GO:0009435">
    <property type="term" value="P:NAD biosynthetic process"/>
    <property type="evidence" value="ECO:0007669"/>
    <property type="project" value="UniProtKB-UniRule"/>
</dbReference>
<dbReference type="CDD" id="cd00553">
    <property type="entry name" value="NAD_synthase"/>
    <property type="match status" value="1"/>
</dbReference>
<dbReference type="FunFam" id="3.40.50.620:FF:000015">
    <property type="entry name" value="NH(3)-dependent NAD(+) synthetase"/>
    <property type="match status" value="1"/>
</dbReference>
<dbReference type="Gene3D" id="3.40.50.620">
    <property type="entry name" value="HUPs"/>
    <property type="match status" value="1"/>
</dbReference>
<dbReference type="HAMAP" id="MF_00193">
    <property type="entry name" value="NadE_ammonia_dep"/>
    <property type="match status" value="1"/>
</dbReference>
<dbReference type="InterPro" id="IPR022310">
    <property type="entry name" value="NAD/GMP_synthase"/>
</dbReference>
<dbReference type="InterPro" id="IPR003694">
    <property type="entry name" value="NAD_synthase"/>
</dbReference>
<dbReference type="InterPro" id="IPR022926">
    <property type="entry name" value="NH(3)-dep_NAD(+)_synth"/>
</dbReference>
<dbReference type="InterPro" id="IPR014729">
    <property type="entry name" value="Rossmann-like_a/b/a_fold"/>
</dbReference>
<dbReference type="NCBIfam" id="TIGR00552">
    <property type="entry name" value="nadE"/>
    <property type="match status" value="1"/>
</dbReference>
<dbReference type="NCBIfam" id="NF001979">
    <property type="entry name" value="PRK00768.1"/>
    <property type="match status" value="1"/>
</dbReference>
<dbReference type="PANTHER" id="PTHR23090">
    <property type="entry name" value="NH 3 /GLUTAMINE-DEPENDENT NAD + SYNTHETASE"/>
    <property type="match status" value="1"/>
</dbReference>
<dbReference type="PANTHER" id="PTHR23090:SF7">
    <property type="entry name" value="NH(3)-DEPENDENT NAD(+) SYNTHETASE"/>
    <property type="match status" value="1"/>
</dbReference>
<dbReference type="Pfam" id="PF02540">
    <property type="entry name" value="NAD_synthase"/>
    <property type="match status" value="1"/>
</dbReference>
<dbReference type="SUPFAM" id="SSF52402">
    <property type="entry name" value="Adenine nucleotide alpha hydrolases-like"/>
    <property type="match status" value="1"/>
</dbReference>